<accession>A4YSS3</accession>
<protein>
    <recommendedName>
        <fullName evidence="1">Ribosomal RNA large subunit methyltransferase E</fullName>
        <ecNumber evidence="1">2.1.1.166</ecNumber>
    </recommendedName>
    <alternativeName>
        <fullName evidence="1">23S rRNA Um2552 methyltransferase</fullName>
    </alternativeName>
    <alternativeName>
        <fullName evidence="1">rRNA (uridine-2'-O-)-methyltransferase</fullName>
    </alternativeName>
</protein>
<name>RLME_BRASO</name>
<evidence type="ECO:0000255" key="1">
    <source>
        <dbReference type="HAMAP-Rule" id="MF_01547"/>
    </source>
</evidence>
<sequence>MAKDTTGRMHVQVKTGGKRKLSSKLWLERQLNDPYVAQAKRDGYRSRATYKLIEIDDKYHMLKPGMTVVDLGAAPGGWSQIAARRVGAEAGKGKVVAIDLLEMGEIPGVTFAQLDFHAQDAPEKLRTMIGGRADVVMSDMAANTTGHRKTDQLRIVGLVELAAHFAGEVLKPGGSFLAKTFQSGADAELLAQLKRDYATVRHVKPAASRQDSSERYVLAMGFRGGEQADLL</sequence>
<organism>
    <name type="scientific">Bradyrhizobium sp. (strain ORS 278)</name>
    <dbReference type="NCBI Taxonomy" id="114615"/>
    <lineage>
        <taxon>Bacteria</taxon>
        <taxon>Pseudomonadati</taxon>
        <taxon>Pseudomonadota</taxon>
        <taxon>Alphaproteobacteria</taxon>
        <taxon>Hyphomicrobiales</taxon>
        <taxon>Nitrobacteraceae</taxon>
        <taxon>Bradyrhizobium</taxon>
    </lineage>
</organism>
<keyword id="KW-0963">Cytoplasm</keyword>
<keyword id="KW-0489">Methyltransferase</keyword>
<keyword id="KW-1185">Reference proteome</keyword>
<keyword id="KW-0698">rRNA processing</keyword>
<keyword id="KW-0949">S-adenosyl-L-methionine</keyword>
<keyword id="KW-0808">Transferase</keyword>
<comment type="function">
    <text evidence="1">Specifically methylates the uridine in position 2552 of 23S rRNA at the 2'-O position of the ribose in the fully assembled 50S ribosomal subunit.</text>
</comment>
<comment type="catalytic activity">
    <reaction evidence="1">
        <text>uridine(2552) in 23S rRNA + S-adenosyl-L-methionine = 2'-O-methyluridine(2552) in 23S rRNA + S-adenosyl-L-homocysteine + H(+)</text>
        <dbReference type="Rhea" id="RHEA:42720"/>
        <dbReference type="Rhea" id="RHEA-COMP:10202"/>
        <dbReference type="Rhea" id="RHEA-COMP:10203"/>
        <dbReference type="ChEBI" id="CHEBI:15378"/>
        <dbReference type="ChEBI" id="CHEBI:57856"/>
        <dbReference type="ChEBI" id="CHEBI:59789"/>
        <dbReference type="ChEBI" id="CHEBI:65315"/>
        <dbReference type="ChEBI" id="CHEBI:74478"/>
        <dbReference type="EC" id="2.1.1.166"/>
    </reaction>
</comment>
<comment type="subcellular location">
    <subcellularLocation>
        <location evidence="1">Cytoplasm</location>
    </subcellularLocation>
</comment>
<comment type="similarity">
    <text evidence="1">Belongs to the class I-like SAM-binding methyltransferase superfamily. RNA methyltransferase RlmE family.</text>
</comment>
<gene>
    <name evidence="1" type="primary">rlmE</name>
    <name evidence="1" type="synonym">ftsJ</name>
    <name evidence="1" type="synonym">rrmJ</name>
    <name type="ordered locus">BRADO3151</name>
</gene>
<feature type="chain" id="PRO_0000300589" description="Ribosomal RNA large subunit methyltransferase E">
    <location>
        <begin position="1"/>
        <end position="231"/>
    </location>
</feature>
<feature type="active site" description="Proton acceptor" evidence="1">
    <location>
        <position position="179"/>
    </location>
</feature>
<feature type="binding site" evidence="1">
    <location>
        <position position="76"/>
    </location>
    <ligand>
        <name>S-adenosyl-L-methionine</name>
        <dbReference type="ChEBI" id="CHEBI:59789"/>
    </ligand>
</feature>
<feature type="binding site" evidence="1">
    <location>
        <position position="78"/>
    </location>
    <ligand>
        <name>S-adenosyl-L-methionine</name>
        <dbReference type="ChEBI" id="CHEBI:59789"/>
    </ligand>
</feature>
<feature type="binding site" evidence="1">
    <location>
        <position position="99"/>
    </location>
    <ligand>
        <name>S-adenosyl-L-methionine</name>
        <dbReference type="ChEBI" id="CHEBI:59789"/>
    </ligand>
</feature>
<feature type="binding site" evidence="1">
    <location>
        <position position="115"/>
    </location>
    <ligand>
        <name>S-adenosyl-L-methionine</name>
        <dbReference type="ChEBI" id="CHEBI:59789"/>
    </ligand>
</feature>
<feature type="binding site" evidence="1">
    <location>
        <position position="139"/>
    </location>
    <ligand>
        <name>S-adenosyl-L-methionine</name>
        <dbReference type="ChEBI" id="CHEBI:59789"/>
    </ligand>
</feature>
<reference key="1">
    <citation type="journal article" date="2007" name="Science">
        <title>Legumes symbioses: absence of nod genes in photosynthetic bradyrhizobia.</title>
        <authorList>
            <person name="Giraud E."/>
            <person name="Moulin L."/>
            <person name="Vallenet D."/>
            <person name="Barbe V."/>
            <person name="Cytryn E."/>
            <person name="Avarre J.-C."/>
            <person name="Jaubert M."/>
            <person name="Simon D."/>
            <person name="Cartieaux F."/>
            <person name="Prin Y."/>
            <person name="Bena G."/>
            <person name="Hannibal L."/>
            <person name="Fardoux J."/>
            <person name="Kojadinovic M."/>
            <person name="Vuillet L."/>
            <person name="Lajus A."/>
            <person name="Cruveiller S."/>
            <person name="Rouy Z."/>
            <person name="Mangenot S."/>
            <person name="Segurens B."/>
            <person name="Dossat C."/>
            <person name="Franck W.L."/>
            <person name="Chang W.-S."/>
            <person name="Saunders E."/>
            <person name="Bruce D."/>
            <person name="Richardson P."/>
            <person name="Normand P."/>
            <person name="Dreyfus B."/>
            <person name="Pignol D."/>
            <person name="Stacey G."/>
            <person name="Emerich D."/>
            <person name="Vermeglio A."/>
            <person name="Medigue C."/>
            <person name="Sadowsky M."/>
        </authorList>
    </citation>
    <scope>NUCLEOTIDE SEQUENCE [LARGE SCALE GENOMIC DNA]</scope>
    <source>
        <strain>ORS 278</strain>
    </source>
</reference>
<dbReference type="EC" id="2.1.1.166" evidence="1"/>
<dbReference type="EMBL" id="CU234118">
    <property type="protein sequence ID" value="CAL76949.1"/>
    <property type="molecule type" value="Genomic_DNA"/>
</dbReference>
<dbReference type="RefSeq" id="WP_011926114.1">
    <property type="nucleotide sequence ID" value="NC_009445.1"/>
</dbReference>
<dbReference type="SMR" id="A4YSS3"/>
<dbReference type="STRING" id="114615.BRADO3151"/>
<dbReference type="KEGG" id="bra:BRADO3151"/>
<dbReference type="eggNOG" id="COG0293">
    <property type="taxonomic scope" value="Bacteria"/>
</dbReference>
<dbReference type="HOGENOM" id="CLU_009422_4_0_5"/>
<dbReference type="OrthoDB" id="9790080at2"/>
<dbReference type="Proteomes" id="UP000001994">
    <property type="component" value="Chromosome"/>
</dbReference>
<dbReference type="GO" id="GO:0005737">
    <property type="term" value="C:cytoplasm"/>
    <property type="evidence" value="ECO:0007669"/>
    <property type="project" value="UniProtKB-SubCell"/>
</dbReference>
<dbReference type="GO" id="GO:0008650">
    <property type="term" value="F:rRNA (uridine-2'-O-)-methyltransferase activity"/>
    <property type="evidence" value="ECO:0007669"/>
    <property type="project" value="UniProtKB-UniRule"/>
</dbReference>
<dbReference type="FunFam" id="3.40.50.150:FF:000005">
    <property type="entry name" value="Ribosomal RNA large subunit methyltransferase E"/>
    <property type="match status" value="1"/>
</dbReference>
<dbReference type="Gene3D" id="3.40.50.150">
    <property type="entry name" value="Vaccinia Virus protein VP39"/>
    <property type="match status" value="1"/>
</dbReference>
<dbReference type="HAMAP" id="MF_01547">
    <property type="entry name" value="RNA_methyltr_E"/>
    <property type="match status" value="1"/>
</dbReference>
<dbReference type="InterPro" id="IPR050082">
    <property type="entry name" value="RNA_methyltr_RlmE"/>
</dbReference>
<dbReference type="InterPro" id="IPR002877">
    <property type="entry name" value="RNA_MeTrfase_FtsJ_dom"/>
</dbReference>
<dbReference type="InterPro" id="IPR015507">
    <property type="entry name" value="rRNA-MeTfrase_E"/>
</dbReference>
<dbReference type="InterPro" id="IPR029063">
    <property type="entry name" value="SAM-dependent_MTases_sf"/>
</dbReference>
<dbReference type="PANTHER" id="PTHR10920">
    <property type="entry name" value="RIBOSOMAL RNA METHYLTRANSFERASE"/>
    <property type="match status" value="1"/>
</dbReference>
<dbReference type="PANTHER" id="PTHR10920:SF18">
    <property type="entry name" value="RRNA METHYLTRANSFERASE 2, MITOCHONDRIAL"/>
    <property type="match status" value="1"/>
</dbReference>
<dbReference type="Pfam" id="PF01728">
    <property type="entry name" value="FtsJ"/>
    <property type="match status" value="1"/>
</dbReference>
<dbReference type="PIRSF" id="PIRSF005461">
    <property type="entry name" value="23S_rRNA_mtase"/>
    <property type="match status" value="1"/>
</dbReference>
<dbReference type="SUPFAM" id="SSF53335">
    <property type="entry name" value="S-adenosyl-L-methionine-dependent methyltransferases"/>
    <property type="match status" value="1"/>
</dbReference>
<proteinExistence type="inferred from homology"/>